<accession>B1L3L5</accession>
<dbReference type="EMBL" id="CP000968">
    <property type="protein sequence ID" value="ACB07044.1"/>
    <property type="molecule type" value="Genomic_DNA"/>
</dbReference>
<dbReference type="RefSeq" id="WP_012308941.1">
    <property type="nucleotide sequence ID" value="NC_010482.1"/>
</dbReference>
<dbReference type="STRING" id="374847.Kcr_0286"/>
<dbReference type="EnsemblBacteria" id="ACB07044">
    <property type="protein sequence ID" value="ACB07044"/>
    <property type="gene ID" value="Kcr_0286"/>
</dbReference>
<dbReference type="GeneID" id="6093574"/>
<dbReference type="KEGG" id="kcr:Kcr_0286"/>
<dbReference type="eggNOG" id="arCOG00969">
    <property type="taxonomic scope" value="Archaea"/>
</dbReference>
<dbReference type="HOGENOM" id="CLU_079268_0_0_2"/>
<dbReference type="InParanoid" id="B1L3L5"/>
<dbReference type="OrthoDB" id="21331at2157"/>
<dbReference type="PhylomeDB" id="B1L3L5"/>
<dbReference type="Proteomes" id="UP000001686">
    <property type="component" value="Chromosome"/>
</dbReference>
<dbReference type="GO" id="GO:0016787">
    <property type="term" value="F:hydrolase activity"/>
    <property type="evidence" value="ECO:0000318"/>
    <property type="project" value="GO_Central"/>
</dbReference>
<dbReference type="Gene3D" id="3.60.15.10">
    <property type="entry name" value="Ribonuclease Z/Hydroxyacylglutathione hydrolase-like"/>
    <property type="match status" value="1"/>
</dbReference>
<dbReference type="HAMAP" id="MF_01406">
    <property type="entry name" value="UPF0282"/>
    <property type="match status" value="1"/>
</dbReference>
<dbReference type="InterPro" id="IPR036866">
    <property type="entry name" value="RibonucZ/Hydroxyglut_hydro"/>
</dbReference>
<dbReference type="InterPro" id="IPR050114">
    <property type="entry name" value="UPF0173_UPF0282_UlaG_hydrolase"/>
</dbReference>
<dbReference type="InterPro" id="IPR014426">
    <property type="entry name" value="UPF0282_hydrls"/>
</dbReference>
<dbReference type="NCBIfam" id="NF003287">
    <property type="entry name" value="PRK04286.1-1"/>
    <property type="match status" value="1"/>
</dbReference>
<dbReference type="PANTHER" id="PTHR43546">
    <property type="entry name" value="UPF0173 METAL-DEPENDENT HYDROLASE MJ1163-RELATED"/>
    <property type="match status" value="1"/>
</dbReference>
<dbReference type="PANTHER" id="PTHR43546:SF4">
    <property type="entry name" value="UPF0282 PROTEIN MJ1629"/>
    <property type="match status" value="1"/>
</dbReference>
<dbReference type="PIRSF" id="PIRSF004944">
    <property type="entry name" value="UCP004944_hydrls"/>
    <property type="match status" value="1"/>
</dbReference>
<dbReference type="SUPFAM" id="SSF56281">
    <property type="entry name" value="Metallo-hydrolase/oxidoreductase"/>
    <property type="match status" value="1"/>
</dbReference>
<gene>
    <name type="ordered locus">Kcr_0286</name>
</gene>
<organism>
    <name type="scientific">Korarchaeum cryptofilum (strain OPF8)</name>
    <dbReference type="NCBI Taxonomy" id="374847"/>
    <lineage>
        <taxon>Archaea</taxon>
        <taxon>Thermoproteota</taxon>
        <taxon>Candidatus Korarchaeia</taxon>
        <taxon>Candidatus Korarchaeales</taxon>
        <taxon>Candidatus Korarchaeaceae</taxon>
        <taxon>Candidatus Korarchaeum</taxon>
    </lineage>
</organism>
<comment type="similarity">
    <text evidence="1">Belongs to the UPF0282 family.</text>
</comment>
<protein>
    <recommendedName>
        <fullName evidence="1">UPF0282 protein Kcr_0286</fullName>
    </recommendedName>
</protein>
<name>Y286_KORCO</name>
<keyword id="KW-1185">Reference proteome</keyword>
<feature type="chain" id="PRO_1000145504" description="UPF0282 protein Kcr_0286">
    <location>
        <begin position="1"/>
        <end position="298"/>
    </location>
</feature>
<sequence length="298" mass="34546">MRILPLSSDSMGARSMATFVETKDLRIMIDPGVALGPSRYGLPPHPKEWERMEAHWREIVRQAHKADLLIVTHYHYDHHNPWEGLEIYEGKRVLVKDPKRNINQSQRGRASFFLKQIEGIANVEIADGRSFREGDTIIEFSEPVFHGTNSKLGYVIEVFIREGEDSFLFTSDVEGPSLDDQARFVLEKKPKVVMVDGPMTYMLGYRYSRASLDASIRNLSSILDAVETLVIDHHLLRDLEWSKRIESVLNKGREVKKKVITSNELVDKPLEMLEAKRKELYELYPVDESEMREWKFED</sequence>
<reference key="1">
    <citation type="journal article" date="2008" name="Proc. Natl. Acad. Sci. U.S.A.">
        <title>A korarchaeal genome reveals new insights into the evolution of the Archaea.</title>
        <authorList>
            <person name="Elkins J.G."/>
            <person name="Podar M."/>
            <person name="Graham D.E."/>
            <person name="Makarova K.S."/>
            <person name="Wolf Y."/>
            <person name="Randau L."/>
            <person name="Hedlund B.P."/>
            <person name="Brochier-Armanet C."/>
            <person name="Kunin V."/>
            <person name="Anderson I."/>
            <person name="Lapidus A."/>
            <person name="Goltsman E."/>
            <person name="Barry K."/>
            <person name="Koonin E.V."/>
            <person name="Hugenholtz P."/>
            <person name="Kyrpides N."/>
            <person name="Wanner G."/>
            <person name="Richardson P."/>
            <person name="Keller M."/>
            <person name="Stetter K.O."/>
        </authorList>
    </citation>
    <scope>NUCLEOTIDE SEQUENCE [LARGE SCALE GENOMIC DNA]</scope>
    <source>
        <strain>OPF8</strain>
    </source>
</reference>
<evidence type="ECO:0000255" key="1">
    <source>
        <dbReference type="HAMAP-Rule" id="MF_01406"/>
    </source>
</evidence>
<proteinExistence type="inferred from homology"/>